<keyword id="KW-0025">Alternative splicing</keyword>
<keyword id="KW-0378">Hydrolase</keyword>
<keyword id="KW-0479">Metal-binding</keyword>
<keyword id="KW-0482">Metalloprotease</keyword>
<keyword id="KW-0645">Protease</keyword>
<keyword id="KW-1185">Reference proteome</keyword>
<keyword id="KW-0862">Zinc</keyword>
<gene>
    <name type="primary">Amz2</name>
</gene>
<accession>Q400C8</accession>
<accession>Q8BVM5</accession>
<accession>Q8K3B9</accession>
<accession>Q9D121</accession>
<reference key="1">
    <citation type="journal article" date="2005" name="J. Biol. Chem.">
        <title>Identification and characterization of human archaemetzincin-1 and - 2, two novel members of a family of metalloproteases widely distributed in Archaea.</title>
        <authorList>
            <person name="Diaz-Perales A."/>
            <person name="Quesada V."/>
            <person name="Peinado J.R."/>
            <person name="Ugalde A.P."/>
            <person name="Alvarez J."/>
            <person name="Suarez M.F."/>
            <person name="Gomis-Rueth X."/>
            <person name="Lopez-Otin C."/>
        </authorList>
    </citation>
    <scope>RETRACTED PAPER</scope>
    <source>
        <strain>C57BL/6J</strain>
    </source>
</reference>
<reference key="2">
    <citation type="journal article" date="2019" name="J. Biol. Chem.">
        <authorList>
            <person name="Diaz-Perales A."/>
            <person name="Quesada V."/>
            <person name="Peinado J.R."/>
            <person name="Ugalde A.P."/>
            <person name="Alvarez J."/>
            <person name="Suarez M.F."/>
            <person name="Gomis-Rueth F.X."/>
            <person name="Lopez-Otin C."/>
        </authorList>
    </citation>
    <scope>RETRACTION NOTICE OF PUBMED:15972818</scope>
</reference>
<reference key="3">
    <citation type="journal article" date="2005" name="Science">
        <title>The transcriptional landscape of the mammalian genome.</title>
        <authorList>
            <person name="Carninci P."/>
            <person name="Kasukawa T."/>
            <person name="Katayama S."/>
            <person name="Gough J."/>
            <person name="Frith M.C."/>
            <person name="Maeda N."/>
            <person name="Oyama R."/>
            <person name="Ravasi T."/>
            <person name="Lenhard B."/>
            <person name="Wells C."/>
            <person name="Kodzius R."/>
            <person name="Shimokawa K."/>
            <person name="Bajic V.B."/>
            <person name="Brenner S.E."/>
            <person name="Batalov S."/>
            <person name="Forrest A.R."/>
            <person name="Zavolan M."/>
            <person name="Davis M.J."/>
            <person name="Wilming L.G."/>
            <person name="Aidinis V."/>
            <person name="Allen J.E."/>
            <person name="Ambesi-Impiombato A."/>
            <person name="Apweiler R."/>
            <person name="Aturaliya R.N."/>
            <person name="Bailey T.L."/>
            <person name="Bansal M."/>
            <person name="Baxter L."/>
            <person name="Beisel K.W."/>
            <person name="Bersano T."/>
            <person name="Bono H."/>
            <person name="Chalk A.M."/>
            <person name="Chiu K.P."/>
            <person name="Choudhary V."/>
            <person name="Christoffels A."/>
            <person name="Clutterbuck D.R."/>
            <person name="Crowe M.L."/>
            <person name="Dalla E."/>
            <person name="Dalrymple B.P."/>
            <person name="de Bono B."/>
            <person name="Della Gatta G."/>
            <person name="di Bernardo D."/>
            <person name="Down T."/>
            <person name="Engstrom P."/>
            <person name="Fagiolini M."/>
            <person name="Faulkner G."/>
            <person name="Fletcher C.F."/>
            <person name="Fukushima T."/>
            <person name="Furuno M."/>
            <person name="Futaki S."/>
            <person name="Gariboldi M."/>
            <person name="Georgii-Hemming P."/>
            <person name="Gingeras T.R."/>
            <person name="Gojobori T."/>
            <person name="Green R.E."/>
            <person name="Gustincich S."/>
            <person name="Harbers M."/>
            <person name="Hayashi Y."/>
            <person name="Hensch T.K."/>
            <person name="Hirokawa N."/>
            <person name="Hill D."/>
            <person name="Huminiecki L."/>
            <person name="Iacono M."/>
            <person name="Ikeo K."/>
            <person name="Iwama A."/>
            <person name="Ishikawa T."/>
            <person name="Jakt M."/>
            <person name="Kanapin A."/>
            <person name="Katoh M."/>
            <person name="Kawasawa Y."/>
            <person name="Kelso J."/>
            <person name="Kitamura H."/>
            <person name="Kitano H."/>
            <person name="Kollias G."/>
            <person name="Krishnan S.P."/>
            <person name="Kruger A."/>
            <person name="Kummerfeld S.K."/>
            <person name="Kurochkin I.V."/>
            <person name="Lareau L.F."/>
            <person name="Lazarevic D."/>
            <person name="Lipovich L."/>
            <person name="Liu J."/>
            <person name="Liuni S."/>
            <person name="McWilliam S."/>
            <person name="Madan Babu M."/>
            <person name="Madera M."/>
            <person name="Marchionni L."/>
            <person name="Matsuda H."/>
            <person name="Matsuzawa S."/>
            <person name="Miki H."/>
            <person name="Mignone F."/>
            <person name="Miyake S."/>
            <person name="Morris K."/>
            <person name="Mottagui-Tabar S."/>
            <person name="Mulder N."/>
            <person name="Nakano N."/>
            <person name="Nakauchi H."/>
            <person name="Ng P."/>
            <person name="Nilsson R."/>
            <person name="Nishiguchi S."/>
            <person name="Nishikawa S."/>
            <person name="Nori F."/>
            <person name="Ohara O."/>
            <person name="Okazaki Y."/>
            <person name="Orlando V."/>
            <person name="Pang K.C."/>
            <person name="Pavan W.J."/>
            <person name="Pavesi G."/>
            <person name="Pesole G."/>
            <person name="Petrovsky N."/>
            <person name="Piazza S."/>
            <person name="Reed J."/>
            <person name="Reid J.F."/>
            <person name="Ring B.Z."/>
            <person name="Ringwald M."/>
            <person name="Rost B."/>
            <person name="Ruan Y."/>
            <person name="Salzberg S.L."/>
            <person name="Sandelin A."/>
            <person name="Schneider C."/>
            <person name="Schoenbach C."/>
            <person name="Sekiguchi K."/>
            <person name="Semple C.A."/>
            <person name="Seno S."/>
            <person name="Sessa L."/>
            <person name="Sheng Y."/>
            <person name="Shibata Y."/>
            <person name="Shimada H."/>
            <person name="Shimada K."/>
            <person name="Silva D."/>
            <person name="Sinclair B."/>
            <person name="Sperling S."/>
            <person name="Stupka E."/>
            <person name="Sugiura K."/>
            <person name="Sultana R."/>
            <person name="Takenaka Y."/>
            <person name="Taki K."/>
            <person name="Tammoja K."/>
            <person name="Tan S.L."/>
            <person name="Tang S."/>
            <person name="Taylor M.S."/>
            <person name="Tegner J."/>
            <person name="Teichmann S.A."/>
            <person name="Ueda H.R."/>
            <person name="van Nimwegen E."/>
            <person name="Verardo R."/>
            <person name="Wei C.L."/>
            <person name="Yagi K."/>
            <person name="Yamanishi H."/>
            <person name="Zabarovsky E."/>
            <person name="Zhu S."/>
            <person name="Zimmer A."/>
            <person name="Hide W."/>
            <person name="Bult C."/>
            <person name="Grimmond S.M."/>
            <person name="Teasdale R.D."/>
            <person name="Liu E.T."/>
            <person name="Brusic V."/>
            <person name="Quackenbush J."/>
            <person name="Wahlestedt C."/>
            <person name="Mattick J.S."/>
            <person name="Hume D.A."/>
            <person name="Kai C."/>
            <person name="Sasaki D."/>
            <person name="Tomaru Y."/>
            <person name="Fukuda S."/>
            <person name="Kanamori-Katayama M."/>
            <person name="Suzuki M."/>
            <person name="Aoki J."/>
            <person name="Arakawa T."/>
            <person name="Iida J."/>
            <person name="Imamura K."/>
            <person name="Itoh M."/>
            <person name="Kato T."/>
            <person name="Kawaji H."/>
            <person name="Kawagashira N."/>
            <person name="Kawashima T."/>
            <person name="Kojima M."/>
            <person name="Kondo S."/>
            <person name="Konno H."/>
            <person name="Nakano K."/>
            <person name="Ninomiya N."/>
            <person name="Nishio T."/>
            <person name="Okada M."/>
            <person name="Plessy C."/>
            <person name="Shibata K."/>
            <person name="Shiraki T."/>
            <person name="Suzuki S."/>
            <person name="Tagami M."/>
            <person name="Waki K."/>
            <person name="Watahiki A."/>
            <person name="Okamura-Oho Y."/>
            <person name="Suzuki H."/>
            <person name="Kawai J."/>
            <person name="Hayashizaki Y."/>
        </authorList>
    </citation>
    <scope>NUCLEOTIDE SEQUENCE [LARGE SCALE MRNA] (ISOFORM 2)</scope>
    <source>
        <strain>C57BL/6J</strain>
        <tissue>Testis</tissue>
    </source>
</reference>
<reference key="4">
    <citation type="journal article" date="2004" name="Genome Res.">
        <title>The status, quality, and expansion of the NIH full-length cDNA project: the Mammalian Gene Collection (MGC).</title>
        <authorList>
            <consortium name="The MGC Project Team"/>
        </authorList>
    </citation>
    <scope>NUCLEOTIDE SEQUENCE [LARGE SCALE MRNA] (ISOFORM 1)</scope>
    <source>
        <strain>129</strain>
        <tissue>Mammary tumor</tissue>
    </source>
</reference>
<reference key="5">
    <citation type="journal article" date="2006" name="Fertil. Steril.">
        <title>Identification of ten novel genes involved in human spermatogenesis by microarray analysis of testicular tissue.</title>
        <authorList>
            <person name="Lin Y.H."/>
            <person name="Lin Y.M."/>
            <person name="Teng Y.N."/>
            <person name="Hsieh T.Y."/>
            <person name="Lin Y.S."/>
            <person name="Kuo P.L."/>
        </authorList>
    </citation>
    <scope>TISSUE SPECIFICITY</scope>
    <scope>DEVELOPMENTAL STAGE</scope>
</reference>
<dbReference type="EC" id="3.4.-.-" evidence="2"/>
<dbReference type="EMBL" id="AJ879914">
    <property type="protein sequence ID" value="CAI53759.1"/>
    <property type="molecule type" value="mRNA"/>
</dbReference>
<dbReference type="EMBL" id="AK004062">
    <property type="protein sequence ID" value="BAB23148.1"/>
    <property type="status" value="ALT_FRAME"/>
    <property type="molecule type" value="mRNA"/>
</dbReference>
<dbReference type="EMBL" id="AK075748">
    <property type="protein sequence ID" value="BAC35928.1"/>
    <property type="status" value="ALT_INIT"/>
    <property type="molecule type" value="mRNA"/>
</dbReference>
<dbReference type="EMBL" id="AK077195">
    <property type="protein sequence ID" value="BAC36674.1"/>
    <property type="status" value="ALT_INIT"/>
    <property type="molecule type" value="mRNA"/>
</dbReference>
<dbReference type="EMBL" id="BC025087">
    <property type="protein sequence ID" value="AAH25087.1"/>
    <property type="status" value="ALT_INIT"/>
    <property type="molecule type" value="mRNA"/>
</dbReference>
<dbReference type="RefSeq" id="NP_001239122.1">
    <property type="nucleotide sequence ID" value="NM_001252193.1"/>
</dbReference>
<dbReference type="RefSeq" id="NP_079551.3">
    <property type="nucleotide sequence ID" value="NM_025275.4"/>
</dbReference>
<dbReference type="SMR" id="Q400C8"/>
<dbReference type="BioGRID" id="199513">
    <property type="interactions" value="3"/>
</dbReference>
<dbReference type="FunCoup" id="Q400C8">
    <property type="interactions" value="72"/>
</dbReference>
<dbReference type="STRING" id="10090.ENSMUSP00000159063"/>
<dbReference type="MEROPS" id="M54.002"/>
<dbReference type="iPTMnet" id="Q400C8"/>
<dbReference type="PhosphoSitePlus" id="Q400C8"/>
<dbReference type="PaxDb" id="10090-ENSMUSP00000099350"/>
<dbReference type="ProteomicsDB" id="296352">
    <molecule id="Q400C8-1"/>
</dbReference>
<dbReference type="ProteomicsDB" id="296353">
    <molecule id="Q400C8-2"/>
</dbReference>
<dbReference type="Pumba" id="Q400C8"/>
<dbReference type="Antibodypedia" id="19248">
    <property type="antibodies" value="73 antibodies from 20 providers"/>
</dbReference>
<dbReference type="DNASU" id="13929"/>
<dbReference type="Ensembl" id="ENSMUST00000103061.3">
    <molecule id="Q400C8-1"/>
    <property type="protein sequence ID" value="ENSMUSP00000099350.3"/>
    <property type="gene ID" value="ENSMUSG00000020610.18"/>
</dbReference>
<dbReference type="GeneID" id="13929"/>
<dbReference type="KEGG" id="mmu:13929"/>
<dbReference type="AGR" id="MGI:104837"/>
<dbReference type="CTD" id="51321"/>
<dbReference type="MGI" id="MGI:104837">
    <property type="gene designation" value="Amz2"/>
</dbReference>
<dbReference type="VEuPathDB" id="HostDB:ENSMUSG00000020610"/>
<dbReference type="eggNOG" id="ENOG502QVTZ">
    <property type="taxonomic scope" value="Eukaryota"/>
</dbReference>
<dbReference type="GeneTree" id="ENSGT00530000063996"/>
<dbReference type="InParanoid" id="Q400C8"/>
<dbReference type="OMA" id="CQWLSCV"/>
<dbReference type="OrthoDB" id="2365600at2759"/>
<dbReference type="BioGRID-ORCS" id="13929">
    <property type="hits" value="2 hits in 78 CRISPR screens"/>
</dbReference>
<dbReference type="ChiTaRS" id="Amz2">
    <property type="organism name" value="mouse"/>
</dbReference>
<dbReference type="PRO" id="PR:Q400C8"/>
<dbReference type="Proteomes" id="UP000000589">
    <property type="component" value="Chromosome 11"/>
</dbReference>
<dbReference type="RNAct" id="Q400C8">
    <property type="molecule type" value="protein"/>
</dbReference>
<dbReference type="Bgee" id="ENSMUSG00000020610">
    <property type="expression patterns" value="Expressed in seminiferous tubule of testis and 264 other cell types or tissues"/>
</dbReference>
<dbReference type="ExpressionAtlas" id="Q400C8">
    <property type="expression patterns" value="baseline and differential"/>
</dbReference>
<dbReference type="GO" id="GO:0046872">
    <property type="term" value="F:metal ion binding"/>
    <property type="evidence" value="ECO:0007669"/>
    <property type="project" value="UniProtKB-KW"/>
</dbReference>
<dbReference type="GO" id="GO:0008237">
    <property type="term" value="F:metallopeptidase activity"/>
    <property type="evidence" value="ECO:0007669"/>
    <property type="project" value="UniProtKB-KW"/>
</dbReference>
<dbReference type="GO" id="GO:0006508">
    <property type="term" value="P:proteolysis"/>
    <property type="evidence" value="ECO:0007669"/>
    <property type="project" value="UniProtKB-KW"/>
</dbReference>
<dbReference type="CDD" id="cd11375">
    <property type="entry name" value="Peptidase_M54"/>
    <property type="match status" value="1"/>
</dbReference>
<dbReference type="Gene3D" id="3.40.390.10">
    <property type="entry name" value="Collagenase (Catalytic Domain)"/>
    <property type="match status" value="1"/>
</dbReference>
<dbReference type="InterPro" id="IPR052009">
    <property type="entry name" value="Archaemetzincin"/>
</dbReference>
<dbReference type="InterPro" id="IPR024079">
    <property type="entry name" value="MetalloPept_cat_dom_sf"/>
</dbReference>
<dbReference type="InterPro" id="IPR012962">
    <property type="entry name" value="Pept_M54_archaemetzincn"/>
</dbReference>
<dbReference type="PANTHER" id="PTHR32205:SF5">
    <property type="entry name" value="ARCHAEMETZINCIN-2"/>
    <property type="match status" value="1"/>
</dbReference>
<dbReference type="PANTHER" id="PTHR32205">
    <property type="entry name" value="ARCHAEMETZINCIN-2-RELATED"/>
    <property type="match status" value="1"/>
</dbReference>
<dbReference type="Pfam" id="PF07998">
    <property type="entry name" value="Peptidase_M54"/>
    <property type="match status" value="1"/>
</dbReference>
<dbReference type="SUPFAM" id="SSF55486">
    <property type="entry name" value="Metalloproteases ('zincins'), catalytic domain"/>
    <property type="match status" value="1"/>
</dbReference>
<dbReference type="PROSITE" id="PS00142">
    <property type="entry name" value="ZINC_PROTEASE"/>
    <property type="match status" value="1"/>
</dbReference>
<feature type="chain" id="PRO_0000159619" description="Archaemetzincin-2">
    <location>
        <begin position="1"/>
        <end position="359"/>
    </location>
</feature>
<feature type="active site" description="Proton acceptor" evidence="3">
    <location>
        <position position="255"/>
    </location>
</feature>
<feature type="binding site" evidence="1">
    <location>
        <position position="254"/>
    </location>
    <ligand>
        <name>Zn(2+)</name>
        <dbReference type="ChEBI" id="CHEBI:29105"/>
        <label>1</label>
        <note>catalytic</note>
    </ligand>
</feature>
<feature type="binding site" evidence="1">
    <location>
        <position position="258"/>
    </location>
    <ligand>
        <name>Zn(2+)</name>
        <dbReference type="ChEBI" id="CHEBI:29105"/>
        <label>1</label>
        <note>catalytic</note>
    </ligand>
</feature>
<feature type="binding site" evidence="1">
    <location>
        <position position="264"/>
    </location>
    <ligand>
        <name>Zn(2+)</name>
        <dbReference type="ChEBI" id="CHEBI:29105"/>
        <label>1</label>
        <note>catalytic</note>
    </ligand>
</feature>
<feature type="binding site" evidence="1">
    <location>
        <position position="265"/>
    </location>
    <ligand>
        <name>Zn(2+)</name>
        <dbReference type="ChEBI" id="CHEBI:29105"/>
        <label>2</label>
    </ligand>
</feature>
<feature type="binding site" evidence="1">
    <location>
        <position position="270"/>
    </location>
    <ligand>
        <name>Zn(2+)</name>
        <dbReference type="ChEBI" id="CHEBI:29105"/>
        <label>2</label>
    </ligand>
</feature>
<feature type="binding site" evidence="1">
    <location>
        <position position="289"/>
    </location>
    <ligand>
        <name>Zn(2+)</name>
        <dbReference type="ChEBI" id="CHEBI:29105"/>
        <label>2</label>
    </ligand>
</feature>
<feature type="binding site" evidence="1">
    <location>
        <position position="292"/>
    </location>
    <ligand>
        <name>Zn(2+)</name>
        <dbReference type="ChEBI" id="CHEBI:29105"/>
        <label>2</label>
    </ligand>
</feature>
<feature type="splice variant" id="VSP_016984" description="In isoform 2." evidence="5">
    <original>ALVKWIDDESCN</original>
    <variation>MNEERLQQQLQI</variation>
    <location>
        <begin position="310"/>
        <end position="321"/>
    </location>
</feature>
<feature type="splice variant" id="VSP_016985" description="In isoform 2." evidence="5">
    <location>
        <begin position="322"/>
        <end position="359"/>
    </location>
</feature>
<protein>
    <recommendedName>
        <fullName>Archaemetzincin-2</fullName>
        <ecNumber evidence="2">3.4.-.-</ecNumber>
    </recommendedName>
    <alternativeName>
        <fullName>Archeobacterial metalloproteinase-like protein 2</fullName>
    </alternativeName>
</protein>
<sequence length="359" mass="41341">MQVLRHSEHTLKTALLSKNPVLVSQYEKLDAGEQRLMNEAFQPRSNLFEPITVHSQSDWISSHPEAPQDFEQFFSDRYRKAPCPKKHIIYIQSIGSLGNTRVISEEYIKWLKGYCEAFFYGLKVKFLEPVSVSETKCSFRVNEHTQNLQIHTGHILAFLKKNKPEDAFCIVGITMIDLYPRDSWNFVFGQASLSSGVGIFSFARYGKDFYTSKYEGNVTSLQLTSPTDYSIFDNYYIPEITSVLLLRSCKTLTHEIGHILGLRHCQWLACLMQGSNHLEESDRRPLNVCPICLRKLQSAIGFNIVERYRALVKWIDDESCNESGATPKSSSEHAHLPKPVEAFKDWREWLMRCIALLEK</sequence>
<name>AMZ2_MOUSE</name>
<organism>
    <name type="scientific">Mus musculus</name>
    <name type="common">Mouse</name>
    <dbReference type="NCBI Taxonomy" id="10090"/>
    <lineage>
        <taxon>Eukaryota</taxon>
        <taxon>Metazoa</taxon>
        <taxon>Chordata</taxon>
        <taxon>Craniata</taxon>
        <taxon>Vertebrata</taxon>
        <taxon>Euteleostomi</taxon>
        <taxon>Mammalia</taxon>
        <taxon>Eutheria</taxon>
        <taxon>Euarchontoglires</taxon>
        <taxon>Glires</taxon>
        <taxon>Rodentia</taxon>
        <taxon>Myomorpha</taxon>
        <taxon>Muroidea</taxon>
        <taxon>Muridae</taxon>
        <taxon>Murinae</taxon>
        <taxon>Mus</taxon>
        <taxon>Mus</taxon>
    </lineage>
</organism>
<evidence type="ECO:0000250" key="1"/>
<evidence type="ECO:0000250" key="2">
    <source>
        <dbReference type="UniProtKB" id="Q8TXW1"/>
    </source>
</evidence>
<evidence type="ECO:0000255" key="3">
    <source>
        <dbReference type="PROSITE-ProRule" id="PRU10095"/>
    </source>
</evidence>
<evidence type="ECO:0000269" key="4">
    <source>
    </source>
</evidence>
<evidence type="ECO:0000303" key="5">
    <source>
    </source>
</evidence>
<evidence type="ECO:0000305" key="6"/>
<proteinExistence type="evidence at transcript level"/>
<comment type="function">
    <text evidence="2">Probable zinc metalloprotease.</text>
</comment>
<comment type="cofactor">
    <cofactor evidence="2">
        <name>Zn(2+)</name>
        <dbReference type="ChEBI" id="CHEBI:29105"/>
    </cofactor>
    <text evidence="2">Binds 2 Zn(2+) ions per subunit. One is catalytic, whereas the other seems to have a structural role.</text>
</comment>
<comment type="alternative products">
    <event type="alternative splicing"/>
    <isoform>
        <id>Q400C8-1</id>
        <name>1</name>
        <sequence type="displayed"/>
    </isoform>
    <isoform>
        <id>Q400C8-2</id>
        <name>2</name>
        <sequence type="described" ref="VSP_016984 VSP_016985"/>
    </isoform>
</comment>
<comment type="tissue specificity">
    <text evidence="4">Predominantly expressed in testis.</text>
</comment>
<comment type="developmental stage">
    <text evidence="4">Expression in testis begins at about postnatal day 10 (P10), with adult level of expression reached at P20.</text>
</comment>
<comment type="similarity">
    <text evidence="6">Belongs to the peptidase M54 family.</text>
</comment>
<comment type="sequence caution" evidence="6">
    <conflict type="erroneous initiation">
        <sequence resource="EMBL-CDS" id="AAH25087"/>
    </conflict>
</comment>
<comment type="sequence caution" evidence="6">
    <conflict type="frameshift">
        <sequence resource="EMBL-CDS" id="BAB23148"/>
    </conflict>
</comment>
<comment type="sequence caution" evidence="6">
    <conflict type="erroneous initiation">
        <sequence resource="EMBL-CDS" id="BAC35928"/>
    </conflict>
</comment>
<comment type="sequence caution" evidence="6">
    <conflict type="erroneous initiation">
        <sequence resource="EMBL-CDS" id="BAC36674"/>
    </conflict>
</comment>